<proteinExistence type="inferred from homology"/>
<reference key="1">
    <citation type="journal article" date="2012" name="MBio">
        <title>Comparative genome analysis of Trichophyton rubrum and related dermatophytes reveals candidate genes involved in infection.</title>
        <authorList>
            <person name="Martinez D.A."/>
            <person name="Oliver B.G."/>
            <person name="Graeser Y."/>
            <person name="Goldberg J.M."/>
            <person name="Li W."/>
            <person name="Martinez-Rossi N.M."/>
            <person name="Monod M."/>
            <person name="Shelest E."/>
            <person name="Barton R.C."/>
            <person name="Birch E."/>
            <person name="Brakhage A.A."/>
            <person name="Chen Z."/>
            <person name="Gurr S.J."/>
            <person name="Heiman D."/>
            <person name="Heitman J."/>
            <person name="Kosti I."/>
            <person name="Rossi A."/>
            <person name="Saif S."/>
            <person name="Samalova M."/>
            <person name="Saunders C.W."/>
            <person name="Shea T."/>
            <person name="Summerbell R.C."/>
            <person name="Xu J."/>
            <person name="Young S."/>
            <person name="Zeng Q."/>
            <person name="Birren B.W."/>
            <person name="Cuomo C.A."/>
            <person name="White T.C."/>
        </authorList>
    </citation>
    <scope>NUCLEOTIDE SEQUENCE [LARGE SCALE GENOMIC DNA]</scope>
    <source>
        <strain>ATCC MYA-4605 / CBS 113480</strain>
    </source>
</reference>
<reference key="2">
    <citation type="journal article" date="2013" name="ACS Synth. Biol.">
        <title>Discovery of cryptic polyketide metabolites from dermatophytes using heterologous expression in Aspergillus nidulans.</title>
        <authorList>
            <person name="Yin W.B."/>
            <person name="Chooi Y.H."/>
            <person name="Smith A.R."/>
            <person name="Cacho R.A."/>
            <person name="Hu Y."/>
            <person name="White T.C."/>
            <person name="Tang Y."/>
        </authorList>
    </citation>
    <scope>FUNCTION</scope>
</reference>
<reference key="3">
    <citation type="journal article" date="2013" name="Org. Lett.">
        <title>Genome mining of a prenylated and immunosuppressive polyketide from pathogenic fungi.</title>
        <authorList>
            <person name="Chooi Y.H."/>
            <person name="Fang J."/>
            <person name="Liu H."/>
            <person name="Filler S.G."/>
            <person name="Wang P."/>
            <person name="Tang Y."/>
        </authorList>
    </citation>
    <scope>FUNCTION</scope>
</reference>
<organism>
    <name type="scientific">Arthroderma otae (strain ATCC MYA-4605 / CBS 113480)</name>
    <name type="common">Microsporum canis</name>
    <dbReference type="NCBI Taxonomy" id="554155"/>
    <lineage>
        <taxon>Eukaryota</taxon>
        <taxon>Fungi</taxon>
        <taxon>Dikarya</taxon>
        <taxon>Ascomycota</taxon>
        <taxon>Pezizomycotina</taxon>
        <taxon>Eurotiomycetes</taxon>
        <taxon>Eurotiomycetidae</taxon>
        <taxon>Onygenales</taxon>
        <taxon>Arthrodermataceae</taxon>
        <taxon>Microsporum</taxon>
    </lineage>
</organism>
<keyword id="KW-0378">Hydrolase</keyword>
<keyword id="KW-0479">Metal-binding</keyword>
<keyword id="KW-1185">Reference proteome</keyword>
<keyword id="KW-0862">Zinc</keyword>
<comment type="function">
    <text evidence="1 2 7 8">Lactamase-like protein; part of the gene cluster that mediates the biosynthesis of neosartoricin B, a prenylated anthracenone that probably exhibits T-cell antiproliferative activity, suggestive of a physiological role as an immunosuppressive agent (PubMed:23368997, PubMed:23758576). The non-reducing polyketide synthase nscA probably synthesizes and cyclizes the decaketide backbone (By similarity). The hydrolase nscB then mediates the product release through hydrolysis followed by spontaneous decarboxylation (By similarity). The prenyltransferase nscD catalyzes the addition of the dimethylallyl group to the aromatic C5 (By similarity). The FAD-dependent monooxygenase nscC is then responsible for the stereospecific hydroxylation at C2 (By similarity). Neosartoricin B can be converted into two additional compounds neosartoricins C and D (By similarity). Neosartoricin C is a spirocyclic compound that is cyclized through the attack of C3 hydroxyl on C14, followed by dehydration (By similarity). On the other hand, neosartoricin D is a further cyclized compound in which attack of C2 on C14 in neosartoricin C results in the formation of the acetal-containing dioxabicyclo-octanone ring (By similarity). Both of these compounds are novel and possibly represent related metabolites of the gene cluster (By similarity).</text>
</comment>
<comment type="cofactor">
    <cofactor evidence="3">
        <name>Zn(2+)</name>
        <dbReference type="ChEBI" id="CHEBI:29105"/>
    </cofactor>
    <text evidence="3">Binds 2 Zn(2+) ions per subunit.</text>
</comment>
<comment type="pathway">
    <text evidence="8">Secondary metabolite biosynthesis.</text>
</comment>
<comment type="similarity">
    <text evidence="6">Belongs to the metallo-beta-lactamase superfamily.</text>
</comment>
<feature type="chain" id="PRO_0000437898" description="Lactamase-like protein nscB">
    <location>
        <begin position="1"/>
        <end position="343"/>
    </location>
</feature>
<feature type="active site" description="Proton donor/acceptor" evidence="4">
    <location>
        <position position="122"/>
    </location>
</feature>
<feature type="binding site" evidence="3">
    <location>
        <position position="118"/>
    </location>
    <ligand>
        <name>Zn(2+)</name>
        <dbReference type="ChEBI" id="CHEBI:29105"/>
        <label>1</label>
        <note>catalytic</note>
    </ligand>
</feature>
<feature type="binding site" evidence="3">
    <location>
        <position position="120"/>
    </location>
    <ligand>
        <name>Zn(2+)</name>
        <dbReference type="ChEBI" id="CHEBI:29105"/>
        <label>1</label>
        <note>catalytic</note>
    </ligand>
</feature>
<feature type="binding site" evidence="3">
    <location>
        <position position="122"/>
    </location>
    <ligand>
        <name>Zn(2+)</name>
        <dbReference type="ChEBI" id="CHEBI:29105"/>
        <label>2</label>
        <note>catalytic</note>
    </ligand>
</feature>
<feature type="binding site" evidence="3">
    <location>
        <position position="123"/>
    </location>
    <ligand>
        <name>Zn(2+)</name>
        <dbReference type="ChEBI" id="CHEBI:29105"/>
        <label>2</label>
        <note>catalytic</note>
    </ligand>
</feature>
<evidence type="ECO:0000250" key="1">
    <source>
        <dbReference type="UniProtKB" id="A1D8J2"/>
    </source>
</evidence>
<evidence type="ECO:0000250" key="2">
    <source>
        <dbReference type="UniProtKB" id="F2S702"/>
    </source>
</evidence>
<evidence type="ECO:0000250" key="3">
    <source>
        <dbReference type="UniProtKB" id="Q988B9"/>
    </source>
</evidence>
<evidence type="ECO:0000255" key="4"/>
<evidence type="ECO:0000303" key="5">
    <source>
    </source>
</evidence>
<evidence type="ECO:0000305" key="6"/>
<evidence type="ECO:0000305" key="7">
    <source>
    </source>
</evidence>
<evidence type="ECO:0000305" key="8">
    <source>
    </source>
</evidence>
<name>NSCB_ARTOC</name>
<accession>C5FM60</accession>
<gene>
    <name evidence="5" type="primary">nscB</name>
    <name type="ORF">MCYG_03601</name>
</gene>
<protein>
    <recommendedName>
        <fullName evidence="5">Lactamase-like protein nscB</fullName>
        <ecNumber evidence="8">3.1.-.-</ecNumber>
    </recommendedName>
    <alternativeName>
        <fullName evidence="5">Neosartoricin B biosynthesis protein B</fullName>
    </alternativeName>
</protein>
<sequence length="343" mass="38096">MGGRMPFNQSFWEEFLMGREGRLPTLPEISHVSKRVVRILGGNPGSMHLQGTNTYLVGTGRSRILIDTAQVKQASFLRLQRAPSQLIHSKKGLPVWISRISSFLRTHNLELSYVLLTHWHGDHTGGVPDLLAHSPSLADKIYKNCPDAGQNPITDGQIFSVNGATVRAVFTPGHSVDHMCFQLEEENALFTGDNVLGHGFSVAQDLGRYMHSLGDMASLGCGIGYPAHGAVIGNLPEKLEEYMKHREGRERMMLSTLTREQAQGEGGRVGETKGGLTLNEIVIAMYGRVPQEVVEKALAPSLLQVLWKLAEDRRVGFKPGDPLKRRWFALDQRKRNRVRGYPS</sequence>
<dbReference type="EC" id="3.1.-.-" evidence="8"/>
<dbReference type="EMBL" id="DS995703">
    <property type="protein sequence ID" value="EEQ30782.1"/>
    <property type="molecule type" value="Genomic_DNA"/>
</dbReference>
<dbReference type="RefSeq" id="XP_002848095.1">
    <property type="nucleotide sequence ID" value="XM_002848049.1"/>
</dbReference>
<dbReference type="SMR" id="C5FM60"/>
<dbReference type="STRING" id="554155.C5FM60"/>
<dbReference type="GeneID" id="9229417"/>
<dbReference type="VEuPathDB" id="FungiDB:MCYG_03601"/>
<dbReference type="eggNOG" id="KOG0813">
    <property type="taxonomic scope" value="Eukaryota"/>
</dbReference>
<dbReference type="HOGENOM" id="CLU_048478_1_0_1"/>
<dbReference type="OMA" id="VDHMCFV"/>
<dbReference type="OrthoDB" id="17458at2759"/>
<dbReference type="Proteomes" id="UP000002035">
    <property type="component" value="Unassembled WGS sequence"/>
</dbReference>
<dbReference type="GO" id="GO:0016787">
    <property type="term" value="F:hydrolase activity"/>
    <property type="evidence" value="ECO:0007669"/>
    <property type="project" value="UniProtKB-KW"/>
</dbReference>
<dbReference type="GO" id="GO:0046872">
    <property type="term" value="F:metal ion binding"/>
    <property type="evidence" value="ECO:0007669"/>
    <property type="project" value="UniProtKB-KW"/>
</dbReference>
<dbReference type="GO" id="GO:0044550">
    <property type="term" value="P:secondary metabolite biosynthetic process"/>
    <property type="evidence" value="ECO:0007669"/>
    <property type="project" value="UniProtKB-ARBA"/>
</dbReference>
<dbReference type="CDD" id="cd07722">
    <property type="entry name" value="LACTB2-like_MBL-fold"/>
    <property type="match status" value="1"/>
</dbReference>
<dbReference type="FunFam" id="3.60.15.10:FF:000041">
    <property type="entry name" value="Metallo-beta-lactamase domain protein"/>
    <property type="match status" value="1"/>
</dbReference>
<dbReference type="Gene3D" id="3.60.15.10">
    <property type="entry name" value="Ribonuclease Z/Hydroxyacylglutathione hydrolase-like"/>
    <property type="match status" value="1"/>
</dbReference>
<dbReference type="Gene3D" id="1.10.10.10">
    <property type="entry name" value="Winged helix-like DNA-binding domain superfamily/Winged helix DNA-binding domain"/>
    <property type="match status" value="1"/>
</dbReference>
<dbReference type="InterPro" id="IPR047921">
    <property type="entry name" value="LACTB2-like_MBL-fold"/>
</dbReference>
<dbReference type="InterPro" id="IPR001279">
    <property type="entry name" value="Metallo-B-lactamas"/>
</dbReference>
<dbReference type="InterPro" id="IPR036866">
    <property type="entry name" value="RibonucZ/Hydroxyglut_hydro"/>
</dbReference>
<dbReference type="InterPro" id="IPR050662">
    <property type="entry name" value="Sec-metab_biosynth-thioest"/>
</dbReference>
<dbReference type="InterPro" id="IPR036388">
    <property type="entry name" value="WH-like_DNA-bd_sf"/>
</dbReference>
<dbReference type="PANTHER" id="PTHR23131">
    <property type="entry name" value="ENDORIBONUCLEASE LACTB2"/>
    <property type="match status" value="1"/>
</dbReference>
<dbReference type="PANTHER" id="PTHR23131:SF2">
    <property type="entry name" value="LACTAMASE-LIKE PROTEIN APTB-RELATED"/>
    <property type="match status" value="1"/>
</dbReference>
<dbReference type="Pfam" id="PF00753">
    <property type="entry name" value="Lactamase_B"/>
    <property type="match status" value="1"/>
</dbReference>
<dbReference type="SMART" id="SM00849">
    <property type="entry name" value="Lactamase_B"/>
    <property type="match status" value="1"/>
</dbReference>
<dbReference type="SUPFAM" id="SSF56281">
    <property type="entry name" value="Metallo-hydrolase/oxidoreductase"/>
    <property type="match status" value="1"/>
</dbReference>
<dbReference type="PROSITE" id="PS00743">
    <property type="entry name" value="BETA_LACTAMASE_B_1"/>
    <property type="match status" value="1"/>
</dbReference>